<sequence length="179" mass="20082">MSLAIIPFITIGWLRCTRKSRDTMSSSPEPQAPMHVTQRQISVFSDEFRQRRRQQMLRFFGATAFTLLSARLAFRGTINRKYVPNMFQLNHRVPLASSQGEALHAFAYGSGLATGGFAMLILGTCWLADVSTVPEFSLRIKALLGESDTQSGRLESAHQDKETRELAAMLDSLLQEKKD</sequence>
<organism>
    <name type="scientific">Eremothecium gossypii (strain ATCC 10895 / CBS 109.51 / FGSC 9923 / NRRL Y-1056)</name>
    <name type="common">Yeast</name>
    <name type="synonym">Ashbya gossypii</name>
    <dbReference type="NCBI Taxonomy" id="284811"/>
    <lineage>
        <taxon>Eukaryota</taxon>
        <taxon>Fungi</taxon>
        <taxon>Dikarya</taxon>
        <taxon>Ascomycota</taxon>
        <taxon>Saccharomycotina</taxon>
        <taxon>Saccharomycetes</taxon>
        <taxon>Saccharomycetales</taxon>
        <taxon>Saccharomycetaceae</taxon>
        <taxon>Eremothecium</taxon>
    </lineage>
</organism>
<keyword id="KW-0472">Membrane</keyword>
<keyword id="KW-1185">Reference proteome</keyword>
<keyword id="KW-0812">Transmembrane</keyword>
<keyword id="KW-1133">Transmembrane helix</keyword>
<name>AIM11_EREGS</name>
<comment type="subcellular location">
    <subcellularLocation>
        <location evidence="2">Membrane</location>
        <topology evidence="2">Multi-pass membrane protein</topology>
    </subcellularLocation>
</comment>
<comment type="similarity">
    <text evidence="2">Belongs to the AIM11 family.</text>
</comment>
<evidence type="ECO:0000255" key="1"/>
<evidence type="ECO:0000305" key="2"/>
<protein>
    <recommendedName>
        <fullName>Altered inheritance of mitochondria protein 11</fullName>
    </recommendedName>
</protein>
<proteinExistence type="inferred from homology"/>
<reference key="1">
    <citation type="journal article" date="2004" name="Science">
        <title>The Ashbya gossypii genome as a tool for mapping the ancient Saccharomyces cerevisiae genome.</title>
        <authorList>
            <person name="Dietrich F.S."/>
            <person name="Voegeli S."/>
            <person name="Brachat S."/>
            <person name="Lerch A."/>
            <person name="Gates K."/>
            <person name="Steiner S."/>
            <person name="Mohr C."/>
            <person name="Poehlmann R."/>
            <person name="Luedi P."/>
            <person name="Choi S."/>
            <person name="Wing R.A."/>
            <person name="Flavier A."/>
            <person name="Gaffney T.D."/>
            <person name="Philippsen P."/>
        </authorList>
    </citation>
    <scope>NUCLEOTIDE SEQUENCE [LARGE SCALE GENOMIC DNA]</scope>
    <source>
        <strain>ATCC 10895 / CBS 109.51 / FGSC 9923 / NRRL Y-1056</strain>
    </source>
</reference>
<reference key="2">
    <citation type="journal article" date="2013" name="G3 (Bethesda)">
        <title>Genomes of Ashbya fungi isolated from insects reveal four mating-type loci, numerous translocations, lack of transposons, and distinct gene duplications.</title>
        <authorList>
            <person name="Dietrich F.S."/>
            <person name="Voegeli S."/>
            <person name="Kuo S."/>
            <person name="Philippsen P."/>
        </authorList>
    </citation>
    <scope>GENOME REANNOTATION</scope>
    <source>
        <strain>ATCC 10895 / CBS 109.51 / FGSC 9923 / NRRL Y-1056</strain>
    </source>
</reference>
<dbReference type="EMBL" id="AE016815">
    <property type="protein sequence ID" value="AAS50988.2"/>
    <property type="molecule type" value="Genomic_DNA"/>
</dbReference>
<dbReference type="RefSeq" id="NP_983164.2">
    <property type="nucleotide sequence ID" value="NM_208517.2"/>
</dbReference>
<dbReference type="FunCoup" id="Q75D07">
    <property type="interactions" value="32"/>
</dbReference>
<dbReference type="EnsemblFungi" id="AAS50988">
    <property type="protein sequence ID" value="AAS50988"/>
    <property type="gene ID" value="AGOS_ABR215C"/>
</dbReference>
<dbReference type="GeneID" id="4619274"/>
<dbReference type="KEGG" id="ago:AGOS_ABR215C"/>
<dbReference type="eggNOG" id="ENOG502SAK0">
    <property type="taxonomic scope" value="Eukaryota"/>
</dbReference>
<dbReference type="HOGENOM" id="CLU_118700_0_0_1"/>
<dbReference type="InParanoid" id="Q75D07"/>
<dbReference type="OMA" id="RFAYKST"/>
<dbReference type="OrthoDB" id="4088121at2759"/>
<dbReference type="Proteomes" id="UP000000591">
    <property type="component" value="Chromosome II"/>
</dbReference>
<dbReference type="GO" id="GO:0016020">
    <property type="term" value="C:membrane"/>
    <property type="evidence" value="ECO:0007669"/>
    <property type="project" value="UniProtKB-SubCell"/>
</dbReference>
<dbReference type="InterPro" id="IPR038814">
    <property type="entry name" value="AIM11"/>
</dbReference>
<dbReference type="PANTHER" id="PTHR39136">
    <property type="entry name" value="ALTERED INHERITANCE OF MITOCHONDRIA PROTEIN 11"/>
    <property type="match status" value="1"/>
</dbReference>
<dbReference type="PANTHER" id="PTHR39136:SF1">
    <property type="entry name" value="ALTERED INHERITANCE OF MITOCHONDRIA PROTEIN 11"/>
    <property type="match status" value="1"/>
</dbReference>
<accession>Q75D07</accession>
<gene>
    <name type="primary">AIM11</name>
    <name type="ordered locus">ABR215C</name>
</gene>
<feature type="chain" id="PRO_0000405640" description="Altered inheritance of mitochondria protein 11">
    <location>
        <begin position="1"/>
        <end position="179"/>
    </location>
</feature>
<feature type="transmembrane region" description="Helical" evidence="1">
    <location>
        <begin position="56"/>
        <end position="78"/>
    </location>
</feature>
<feature type="transmembrane region" description="Helical" evidence="1">
    <location>
        <begin position="105"/>
        <end position="127"/>
    </location>
</feature>